<accession>Q55805</accession>
<protein>
    <recommendedName>
        <fullName>Imidazole glycerol phosphate synthase subunit HisH</fullName>
        <ecNumber>4.3.2.10</ecNumber>
    </recommendedName>
    <alternativeName>
        <fullName>IGP synthase glutaminase subunit</fullName>
        <ecNumber>3.5.1.2</ecNumber>
    </alternativeName>
    <alternativeName>
        <fullName>IGP synthase subunit HisH</fullName>
    </alternativeName>
    <alternativeName>
        <fullName>ImGP synthase subunit HisH</fullName>
        <shortName>IGPS subunit HisH</shortName>
    </alternativeName>
</protein>
<name>HIS5_SYNY3</name>
<gene>
    <name type="primary">hisH</name>
    <name type="ordered locus">slr0084</name>
</gene>
<sequence length="210" mass="22497">MGYIAVVDYDMGNLHSVCKGLEKVGGNPLVTDQAHVIDGATAIVLPGVGSFDPAVQHLRARGLEEVLKTAIAKGIPFLGICLGSQLLFDSSEEGQETGLGIIPGQVKHFRSEPGLTIPHMGWNGLQFNQPDLCLWQDLPPEPQVYFVHSYYMAPLDPQVIAASTTHGSQTIAAAIAKDNVMAVQFHPEKSSTLGLKILANFVKKVALSDI</sequence>
<organism>
    <name type="scientific">Synechocystis sp. (strain ATCC 27184 / PCC 6803 / Kazusa)</name>
    <dbReference type="NCBI Taxonomy" id="1111708"/>
    <lineage>
        <taxon>Bacteria</taxon>
        <taxon>Bacillati</taxon>
        <taxon>Cyanobacteriota</taxon>
        <taxon>Cyanophyceae</taxon>
        <taxon>Synechococcales</taxon>
        <taxon>Merismopediaceae</taxon>
        <taxon>Synechocystis</taxon>
    </lineage>
</organism>
<feature type="chain" id="PRO_0000152436" description="Imidazole glycerol phosphate synthase subunit HisH">
    <location>
        <begin position="1"/>
        <end position="210"/>
    </location>
</feature>
<feature type="domain" description="Glutamine amidotransferase type-1">
    <location>
        <begin position="3"/>
        <end position="210"/>
    </location>
</feature>
<feature type="active site" description="Nucleophile" evidence="1">
    <location>
        <position position="81"/>
    </location>
</feature>
<feature type="active site" evidence="1">
    <location>
        <position position="186"/>
    </location>
</feature>
<feature type="active site" evidence="1">
    <location>
        <position position="188"/>
    </location>
</feature>
<comment type="function">
    <text evidence="1">IGPS catalyzes the conversion of PRFAR and glutamine to IGP, AICAR and glutamate. The HisH subunit catalyzes the hydrolysis of glutamine to glutamate and ammonia as part of the synthesis of IGP and AICAR. The resulting ammonia molecule is channeled to the active site of HisF (By similarity).</text>
</comment>
<comment type="catalytic activity">
    <reaction>
        <text>5-[(5-phospho-1-deoxy-D-ribulos-1-ylimino)methylamino]-1-(5-phospho-beta-D-ribosyl)imidazole-4-carboxamide + L-glutamine = D-erythro-1-(imidazol-4-yl)glycerol 3-phosphate + 5-amino-1-(5-phospho-beta-D-ribosyl)imidazole-4-carboxamide + L-glutamate + H(+)</text>
        <dbReference type="Rhea" id="RHEA:24793"/>
        <dbReference type="ChEBI" id="CHEBI:15378"/>
        <dbReference type="ChEBI" id="CHEBI:29985"/>
        <dbReference type="ChEBI" id="CHEBI:58278"/>
        <dbReference type="ChEBI" id="CHEBI:58359"/>
        <dbReference type="ChEBI" id="CHEBI:58475"/>
        <dbReference type="ChEBI" id="CHEBI:58525"/>
        <dbReference type="EC" id="4.3.2.10"/>
    </reaction>
</comment>
<comment type="catalytic activity">
    <reaction>
        <text>L-glutamine + H2O = L-glutamate + NH4(+)</text>
        <dbReference type="Rhea" id="RHEA:15889"/>
        <dbReference type="ChEBI" id="CHEBI:15377"/>
        <dbReference type="ChEBI" id="CHEBI:28938"/>
        <dbReference type="ChEBI" id="CHEBI:29985"/>
        <dbReference type="ChEBI" id="CHEBI:58359"/>
        <dbReference type="EC" id="3.5.1.2"/>
    </reaction>
</comment>
<comment type="pathway">
    <text>Amino-acid biosynthesis; L-histidine biosynthesis; L-histidine from 5-phospho-alpha-D-ribose 1-diphosphate: step 5/9.</text>
</comment>
<comment type="subunit">
    <text evidence="1">Heterodimer of HisH and HisF.</text>
</comment>
<comment type="subcellular location">
    <subcellularLocation>
        <location evidence="1">Cytoplasm</location>
    </subcellularLocation>
</comment>
<reference key="1">
    <citation type="journal article" date="1995" name="DNA Res.">
        <title>Sequence analysis of the genome of the unicellular cyanobacterium Synechocystis sp. strain PCC6803. I. Sequence features in the 1 Mb region from map positions 64% to 92% of the genome.</title>
        <authorList>
            <person name="Kaneko T."/>
            <person name="Tanaka A."/>
            <person name="Sato S."/>
            <person name="Kotani H."/>
            <person name="Sazuka T."/>
            <person name="Miyajima N."/>
            <person name="Sugiura M."/>
            <person name="Tabata S."/>
        </authorList>
    </citation>
    <scope>NUCLEOTIDE SEQUENCE [LARGE SCALE GENOMIC DNA]</scope>
    <source>
        <strain>ATCC 27184 / PCC 6803 / N-1</strain>
    </source>
</reference>
<reference key="2">
    <citation type="journal article" date="1996" name="DNA Res.">
        <title>Sequence analysis of the genome of the unicellular cyanobacterium Synechocystis sp. strain PCC6803. II. Sequence determination of the entire genome and assignment of potential protein-coding regions.</title>
        <authorList>
            <person name="Kaneko T."/>
            <person name="Sato S."/>
            <person name="Kotani H."/>
            <person name="Tanaka A."/>
            <person name="Asamizu E."/>
            <person name="Nakamura Y."/>
            <person name="Miyajima N."/>
            <person name="Hirosawa M."/>
            <person name="Sugiura M."/>
            <person name="Sasamoto S."/>
            <person name="Kimura T."/>
            <person name="Hosouchi T."/>
            <person name="Matsuno A."/>
            <person name="Muraki A."/>
            <person name="Nakazaki N."/>
            <person name="Naruo K."/>
            <person name="Okumura S."/>
            <person name="Shimpo S."/>
            <person name="Takeuchi C."/>
            <person name="Wada T."/>
            <person name="Watanabe A."/>
            <person name="Yamada M."/>
            <person name="Yasuda M."/>
            <person name="Tabata S."/>
        </authorList>
    </citation>
    <scope>NUCLEOTIDE SEQUENCE [LARGE SCALE GENOMIC DNA]</scope>
    <source>
        <strain>ATCC 27184 / PCC 6803 / Kazusa</strain>
    </source>
</reference>
<proteinExistence type="inferred from homology"/>
<keyword id="KW-0028">Amino-acid biosynthesis</keyword>
<keyword id="KW-0963">Cytoplasm</keyword>
<keyword id="KW-0315">Glutamine amidotransferase</keyword>
<keyword id="KW-0368">Histidine biosynthesis</keyword>
<keyword id="KW-0378">Hydrolase</keyword>
<keyword id="KW-0456">Lyase</keyword>
<keyword id="KW-1185">Reference proteome</keyword>
<dbReference type="EC" id="4.3.2.10"/>
<dbReference type="EC" id="3.5.1.2"/>
<dbReference type="EMBL" id="BA000022">
    <property type="protein sequence ID" value="BAA10558.1"/>
    <property type="molecule type" value="Genomic_DNA"/>
</dbReference>
<dbReference type="PIR" id="S76614">
    <property type="entry name" value="S76614"/>
</dbReference>
<dbReference type="SMR" id="Q55805"/>
<dbReference type="FunCoup" id="Q55805">
    <property type="interactions" value="350"/>
</dbReference>
<dbReference type="IntAct" id="Q55805">
    <property type="interactions" value="1"/>
</dbReference>
<dbReference type="STRING" id="1148.gene:10500062"/>
<dbReference type="PaxDb" id="1148-1001721"/>
<dbReference type="EnsemblBacteria" id="BAA10558">
    <property type="protein sequence ID" value="BAA10558"/>
    <property type="gene ID" value="BAA10558"/>
</dbReference>
<dbReference type="KEGG" id="syn:slr0084"/>
<dbReference type="eggNOG" id="COG0118">
    <property type="taxonomic scope" value="Bacteria"/>
</dbReference>
<dbReference type="InParanoid" id="Q55805"/>
<dbReference type="PhylomeDB" id="Q55805"/>
<dbReference type="UniPathway" id="UPA00031">
    <property type="reaction ID" value="UER00010"/>
</dbReference>
<dbReference type="Proteomes" id="UP000001425">
    <property type="component" value="Chromosome"/>
</dbReference>
<dbReference type="GO" id="GO:0005737">
    <property type="term" value="C:cytoplasm"/>
    <property type="evidence" value="ECO:0007669"/>
    <property type="project" value="UniProtKB-SubCell"/>
</dbReference>
<dbReference type="GO" id="GO:0004359">
    <property type="term" value="F:glutaminase activity"/>
    <property type="evidence" value="ECO:0007669"/>
    <property type="project" value="UniProtKB-EC"/>
</dbReference>
<dbReference type="GO" id="GO:0000107">
    <property type="term" value="F:imidazoleglycerol-phosphate synthase activity"/>
    <property type="evidence" value="ECO:0000318"/>
    <property type="project" value="GO_Central"/>
</dbReference>
<dbReference type="GO" id="GO:0016829">
    <property type="term" value="F:lyase activity"/>
    <property type="evidence" value="ECO:0007669"/>
    <property type="project" value="UniProtKB-KW"/>
</dbReference>
<dbReference type="GO" id="GO:0000105">
    <property type="term" value="P:L-histidine biosynthetic process"/>
    <property type="evidence" value="ECO:0007669"/>
    <property type="project" value="UniProtKB-UniRule"/>
</dbReference>
<dbReference type="CDD" id="cd01748">
    <property type="entry name" value="GATase1_IGP_Synthase"/>
    <property type="match status" value="1"/>
</dbReference>
<dbReference type="FunFam" id="3.40.50.880:FF:000009">
    <property type="entry name" value="Imidazole glycerol phosphate synthase subunit HisH"/>
    <property type="match status" value="1"/>
</dbReference>
<dbReference type="Gene3D" id="3.40.50.880">
    <property type="match status" value="1"/>
</dbReference>
<dbReference type="HAMAP" id="MF_00278">
    <property type="entry name" value="HisH"/>
    <property type="match status" value="1"/>
</dbReference>
<dbReference type="InterPro" id="IPR029062">
    <property type="entry name" value="Class_I_gatase-like"/>
</dbReference>
<dbReference type="InterPro" id="IPR017926">
    <property type="entry name" value="GATASE"/>
</dbReference>
<dbReference type="InterPro" id="IPR010139">
    <property type="entry name" value="Imidazole-glycPsynth_HisH"/>
</dbReference>
<dbReference type="NCBIfam" id="TIGR01855">
    <property type="entry name" value="IMP_synth_hisH"/>
    <property type="match status" value="1"/>
</dbReference>
<dbReference type="PANTHER" id="PTHR42701">
    <property type="entry name" value="IMIDAZOLE GLYCEROL PHOSPHATE SYNTHASE SUBUNIT HISH"/>
    <property type="match status" value="1"/>
</dbReference>
<dbReference type="PANTHER" id="PTHR42701:SF1">
    <property type="entry name" value="IMIDAZOLE GLYCEROL PHOSPHATE SYNTHASE SUBUNIT HISH"/>
    <property type="match status" value="1"/>
</dbReference>
<dbReference type="Pfam" id="PF00117">
    <property type="entry name" value="GATase"/>
    <property type="match status" value="1"/>
</dbReference>
<dbReference type="PIRSF" id="PIRSF000495">
    <property type="entry name" value="Amidotransf_hisH"/>
    <property type="match status" value="1"/>
</dbReference>
<dbReference type="SUPFAM" id="SSF52317">
    <property type="entry name" value="Class I glutamine amidotransferase-like"/>
    <property type="match status" value="1"/>
</dbReference>
<dbReference type="PROSITE" id="PS51273">
    <property type="entry name" value="GATASE_TYPE_1"/>
    <property type="match status" value="1"/>
</dbReference>
<evidence type="ECO:0000250" key="1"/>